<evidence type="ECO:0000255" key="1">
    <source>
        <dbReference type="HAMAP-Rule" id="MF_00127"/>
    </source>
</evidence>
<organism>
    <name type="scientific">Saccharolobus islandicus (strain Y.G.57.14 / Yellowstone #1)</name>
    <name type="common">Sulfolobus islandicus</name>
    <dbReference type="NCBI Taxonomy" id="439386"/>
    <lineage>
        <taxon>Archaea</taxon>
        <taxon>Thermoproteota</taxon>
        <taxon>Thermoprotei</taxon>
        <taxon>Sulfolobales</taxon>
        <taxon>Sulfolobaceae</taxon>
        <taxon>Saccharolobus</taxon>
    </lineage>
</organism>
<name>SYH_SACI7</name>
<sequence>MTKFETVRGMKDYIGIDAEKIRYLESTFRDLAIKYGYSEIITPVVEEFKLFALKGGEELRETMYVFKDKADRELSLRPEITPSVARAYIQNLQSSPKPIRLFYFGTVYRYDEPQYGRYREFRQAGIEMIGDSSILADLEVLDLLYNFYDKLNLSNDITIKINNIGIFRKIMDKYNIEDNLQEHILHLIDKNKINEALDILEKNLKNKDIIDFFNKILTKKDTKLEDIESLAELEEVSRLDIKSEFLYLFRLSRILSDLNIKFKIDLGFVRGLAYYTGLIFEVLHPSVQFSIAGGGRYDKLIELYGGLPSPAIGFAIGVERTLLVIKDLKVEEPVNVIVIGMSEDTIPSMFMVSRILRKEEYKVVINTKDQPLSKLLPYYASQGFKVAIIIGKQELEKNMITVRNLITRKQISVPLENIEDAIKQTL</sequence>
<reference key="1">
    <citation type="journal article" date="2009" name="Proc. Natl. Acad. Sci. U.S.A.">
        <title>Biogeography of the Sulfolobus islandicus pan-genome.</title>
        <authorList>
            <person name="Reno M.L."/>
            <person name="Held N.L."/>
            <person name="Fields C.J."/>
            <person name="Burke P.V."/>
            <person name="Whitaker R.J."/>
        </authorList>
    </citation>
    <scope>NUCLEOTIDE SEQUENCE [LARGE SCALE GENOMIC DNA]</scope>
    <source>
        <strain>Y.G.57.14 / Yellowstone #1</strain>
    </source>
</reference>
<comment type="catalytic activity">
    <reaction evidence="1">
        <text>tRNA(His) + L-histidine + ATP = L-histidyl-tRNA(His) + AMP + diphosphate + H(+)</text>
        <dbReference type="Rhea" id="RHEA:17313"/>
        <dbReference type="Rhea" id="RHEA-COMP:9665"/>
        <dbReference type="Rhea" id="RHEA-COMP:9689"/>
        <dbReference type="ChEBI" id="CHEBI:15378"/>
        <dbReference type="ChEBI" id="CHEBI:30616"/>
        <dbReference type="ChEBI" id="CHEBI:33019"/>
        <dbReference type="ChEBI" id="CHEBI:57595"/>
        <dbReference type="ChEBI" id="CHEBI:78442"/>
        <dbReference type="ChEBI" id="CHEBI:78527"/>
        <dbReference type="ChEBI" id="CHEBI:456215"/>
        <dbReference type="EC" id="6.1.1.21"/>
    </reaction>
</comment>
<comment type="subcellular location">
    <subcellularLocation>
        <location evidence="1">Cytoplasm</location>
    </subcellularLocation>
</comment>
<comment type="similarity">
    <text evidence="1">Belongs to the class-II aminoacyl-tRNA synthetase family.</text>
</comment>
<proteinExistence type="inferred from homology"/>
<dbReference type="EC" id="6.1.1.21" evidence="1"/>
<dbReference type="EMBL" id="CP001403">
    <property type="protein sequence ID" value="ACP46195.1"/>
    <property type="molecule type" value="Genomic_DNA"/>
</dbReference>
<dbReference type="RefSeq" id="WP_012716404.1">
    <property type="nucleotide sequence ID" value="NC_012622.1"/>
</dbReference>
<dbReference type="SMR" id="C3N7K1"/>
<dbReference type="GeneID" id="7807588"/>
<dbReference type="KEGG" id="siy:YG5714_1939"/>
<dbReference type="HOGENOM" id="CLU_025113_3_1_2"/>
<dbReference type="Proteomes" id="UP000002308">
    <property type="component" value="Chromosome"/>
</dbReference>
<dbReference type="GO" id="GO:0005737">
    <property type="term" value="C:cytoplasm"/>
    <property type="evidence" value="ECO:0007669"/>
    <property type="project" value="UniProtKB-SubCell"/>
</dbReference>
<dbReference type="GO" id="GO:0005524">
    <property type="term" value="F:ATP binding"/>
    <property type="evidence" value="ECO:0007669"/>
    <property type="project" value="UniProtKB-UniRule"/>
</dbReference>
<dbReference type="GO" id="GO:0004821">
    <property type="term" value="F:histidine-tRNA ligase activity"/>
    <property type="evidence" value="ECO:0007669"/>
    <property type="project" value="UniProtKB-UniRule"/>
</dbReference>
<dbReference type="GO" id="GO:0006427">
    <property type="term" value="P:histidyl-tRNA aminoacylation"/>
    <property type="evidence" value="ECO:0007669"/>
    <property type="project" value="UniProtKB-UniRule"/>
</dbReference>
<dbReference type="GO" id="GO:0000105">
    <property type="term" value="P:L-histidine biosynthetic process"/>
    <property type="evidence" value="ECO:0007669"/>
    <property type="project" value="InterPro"/>
</dbReference>
<dbReference type="CDD" id="cd00773">
    <property type="entry name" value="HisRS-like_core"/>
    <property type="match status" value="1"/>
</dbReference>
<dbReference type="FunFam" id="3.30.930.10:FF:000121">
    <property type="entry name" value="Histidine--tRNA ligase"/>
    <property type="match status" value="1"/>
</dbReference>
<dbReference type="Gene3D" id="3.40.50.800">
    <property type="entry name" value="Anticodon-binding domain"/>
    <property type="match status" value="1"/>
</dbReference>
<dbReference type="Gene3D" id="3.30.930.10">
    <property type="entry name" value="Bira Bifunctional Protein, Domain 2"/>
    <property type="match status" value="1"/>
</dbReference>
<dbReference type="HAMAP" id="MF_00127">
    <property type="entry name" value="His_tRNA_synth"/>
    <property type="match status" value="1"/>
</dbReference>
<dbReference type="HAMAP" id="MF_00125">
    <property type="entry name" value="HisZ"/>
    <property type="match status" value="1"/>
</dbReference>
<dbReference type="InterPro" id="IPR006195">
    <property type="entry name" value="aa-tRNA-synth_II"/>
</dbReference>
<dbReference type="InterPro" id="IPR045864">
    <property type="entry name" value="aa-tRNA-synth_II/BPL/LPL"/>
</dbReference>
<dbReference type="InterPro" id="IPR004154">
    <property type="entry name" value="Anticodon-bd"/>
</dbReference>
<dbReference type="InterPro" id="IPR036621">
    <property type="entry name" value="Anticodon-bd_dom_sf"/>
</dbReference>
<dbReference type="InterPro" id="IPR015807">
    <property type="entry name" value="His-tRNA-ligase"/>
</dbReference>
<dbReference type="InterPro" id="IPR041715">
    <property type="entry name" value="HisRS-like_core"/>
</dbReference>
<dbReference type="InterPro" id="IPR004516">
    <property type="entry name" value="HisRS/HisZ"/>
</dbReference>
<dbReference type="InterPro" id="IPR004517">
    <property type="entry name" value="HisZ"/>
</dbReference>
<dbReference type="NCBIfam" id="TIGR00442">
    <property type="entry name" value="hisS"/>
    <property type="match status" value="1"/>
</dbReference>
<dbReference type="PANTHER" id="PTHR43707:SF1">
    <property type="entry name" value="HISTIDINE--TRNA LIGASE, MITOCHONDRIAL-RELATED"/>
    <property type="match status" value="1"/>
</dbReference>
<dbReference type="PANTHER" id="PTHR43707">
    <property type="entry name" value="HISTIDYL-TRNA SYNTHETASE"/>
    <property type="match status" value="1"/>
</dbReference>
<dbReference type="Pfam" id="PF03129">
    <property type="entry name" value="HGTP_anticodon"/>
    <property type="match status" value="1"/>
</dbReference>
<dbReference type="Pfam" id="PF13393">
    <property type="entry name" value="tRNA-synt_His"/>
    <property type="match status" value="1"/>
</dbReference>
<dbReference type="PIRSF" id="PIRSF001549">
    <property type="entry name" value="His-tRNA_synth"/>
    <property type="match status" value="1"/>
</dbReference>
<dbReference type="SUPFAM" id="SSF52954">
    <property type="entry name" value="Class II aaRS ABD-related"/>
    <property type="match status" value="1"/>
</dbReference>
<dbReference type="SUPFAM" id="SSF55681">
    <property type="entry name" value="Class II aaRS and biotin synthetases"/>
    <property type="match status" value="1"/>
</dbReference>
<dbReference type="PROSITE" id="PS50862">
    <property type="entry name" value="AA_TRNA_LIGASE_II"/>
    <property type="match status" value="1"/>
</dbReference>
<accession>C3N7K1</accession>
<gene>
    <name evidence="1" type="primary">hisS</name>
    <name type="ordered locus">YG5714_1939</name>
</gene>
<protein>
    <recommendedName>
        <fullName evidence="1">Histidine--tRNA ligase</fullName>
        <ecNumber evidence="1">6.1.1.21</ecNumber>
    </recommendedName>
    <alternativeName>
        <fullName evidence="1">Histidyl-tRNA synthetase</fullName>
        <shortName evidence="1">HisRS</shortName>
    </alternativeName>
</protein>
<keyword id="KW-0030">Aminoacyl-tRNA synthetase</keyword>
<keyword id="KW-0067">ATP-binding</keyword>
<keyword id="KW-0963">Cytoplasm</keyword>
<keyword id="KW-0436">Ligase</keyword>
<keyword id="KW-0547">Nucleotide-binding</keyword>
<keyword id="KW-0648">Protein biosynthesis</keyword>
<feature type="chain" id="PRO_1000203153" description="Histidine--tRNA ligase">
    <location>
        <begin position="1"/>
        <end position="426"/>
    </location>
</feature>